<name>H10_BOVIN</name>
<comment type="function">
    <text evidence="1">Histones H1 are necessary for the condensation of nucleosome chains into higher-order structures. The histones H1.0 are found in cells that are in terminal stages of differentiation or that have low rates of cell division (By similarity).</text>
</comment>
<comment type="subcellular location">
    <subcellularLocation>
        <location evidence="4">Nucleus</location>
    </subcellularLocation>
    <subcellularLocation>
        <location evidence="4">Chromosome</location>
    </subcellularLocation>
</comment>
<comment type="PTM">
    <text evidence="2">ADP-ribosylated on Ser-104 in response to DNA damage.</text>
</comment>
<comment type="similarity">
    <text evidence="4">Belongs to the histone H1/H5 family.</text>
</comment>
<proteinExistence type="evidence at transcript level"/>
<dbReference type="EMBL" id="BC122613">
    <property type="protein sequence ID" value="AAI22614.1"/>
    <property type="molecule type" value="mRNA"/>
</dbReference>
<dbReference type="RefSeq" id="NP_001069955.1">
    <property type="nucleotide sequence ID" value="NM_001076487.1"/>
</dbReference>
<dbReference type="SMR" id="Q0IIJ2"/>
<dbReference type="BioGRID" id="545568">
    <property type="interactions" value="1"/>
</dbReference>
<dbReference type="FunCoup" id="Q0IIJ2">
    <property type="interactions" value="218"/>
</dbReference>
<dbReference type="PaxDb" id="9913-ENSBTAP00000049194"/>
<dbReference type="PeptideAtlas" id="Q0IIJ2"/>
<dbReference type="Ensembl" id="ENSBTAT00000135739.1">
    <property type="protein sequence ID" value="ENSBTAP00000095511.1"/>
    <property type="gene ID" value="ENSBTAG00000067495.1"/>
</dbReference>
<dbReference type="GeneID" id="617975"/>
<dbReference type="KEGG" id="bta:617975"/>
<dbReference type="CTD" id="3005"/>
<dbReference type="eggNOG" id="KOG4012">
    <property type="taxonomic scope" value="Eukaryota"/>
</dbReference>
<dbReference type="GeneTree" id="ENSGT00810000125570"/>
<dbReference type="HOGENOM" id="CLU_052897_1_1_1"/>
<dbReference type="InParanoid" id="Q0IIJ2"/>
<dbReference type="OrthoDB" id="1110759at2759"/>
<dbReference type="TreeFam" id="TF313664"/>
<dbReference type="Proteomes" id="UP000009136">
    <property type="component" value="Chromosome 5"/>
</dbReference>
<dbReference type="GO" id="GO:0000786">
    <property type="term" value="C:nucleosome"/>
    <property type="evidence" value="ECO:0007669"/>
    <property type="project" value="InterPro"/>
</dbReference>
<dbReference type="GO" id="GO:0005634">
    <property type="term" value="C:nucleus"/>
    <property type="evidence" value="ECO:0000318"/>
    <property type="project" value="GO_Central"/>
</dbReference>
<dbReference type="GO" id="GO:0003690">
    <property type="term" value="F:double-stranded DNA binding"/>
    <property type="evidence" value="ECO:0000318"/>
    <property type="project" value="GO_Central"/>
</dbReference>
<dbReference type="GO" id="GO:0031492">
    <property type="term" value="F:nucleosomal DNA binding"/>
    <property type="evidence" value="ECO:0000318"/>
    <property type="project" value="GO_Central"/>
</dbReference>
<dbReference type="GO" id="GO:0030527">
    <property type="term" value="F:structural constituent of chromatin"/>
    <property type="evidence" value="ECO:0007669"/>
    <property type="project" value="InterPro"/>
</dbReference>
<dbReference type="GO" id="GO:0030261">
    <property type="term" value="P:chromosome condensation"/>
    <property type="evidence" value="ECO:0000318"/>
    <property type="project" value="GO_Central"/>
</dbReference>
<dbReference type="GO" id="GO:0045910">
    <property type="term" value="P:negative regulation of DNA recombination"/>
    <property type="evidence" value="ECO:0000318"/>
    <property type="project" value="GO_Central"/>
</dbReference>
<dbReference type="GO" id="GO:0006334">
    <property type="term" value="P:nucleosome assembly"/>
    <property type="evidence" value="ECO:0007669"/>
    <property type="project" value="InterPro"/>
</dbReference>
<dbReference type="CDD" id="cd00073">
    <property type="entry name" value="H15"/>
    <property type="match status" value="1"/>
</dbReference>
<dbReference type="FunFam" id="1.10.10.10:FF:000140">
    <property type="entry name" value="Histone H1.0"/>
    <property type="match status" value="1"/>
</dbReference>
<dbReference type="Gene3D" id="1.10.10.10">
    <property type="entry name" value="Winged helix-like DNA-binding domain superfamily/Winged helix DNA-binding domain"/>
    <property type="match status" value="1"/>
</dbReference>
<dbReference type="InterPro" id="IPR005819">
    <property type="entry name" value="H1/H5"/>
</dbReference>
<dbReference type="InterPro" id="IPR005818">
    <property type="entry name" value="Histone_H1/H5_H15"/>
</dbReference>
<dbReference type="InterPro" id="IPR036388">
    <property type="entry name" value="WH-like_DNA-bd_sf"/>
</dbReference>
<dbReference type="InterPro" id="IPR036390">
    <property type="entry name" value="WH_DNA-bd_sf"/>
</dbReference>
<dbReference type="PANTHER" id="PTHR11467">
    <property type="entry name" value="HISTONE H1"/>
    <property type="match status" value="1"/>
</dbReference>
<dbReference type="PANTHER" id="PTHR11467:SF182">
    <property type="entry name" value="HISTONE H1.0"/>
    <property type="match status" value="1"/>
</dbReference>
<dbReference type="Pfam" id="PF00538">
    <property type="entry name" value="Linker_histone"/>
    <property type="match status" value="1"/>
</dbReference>
<dbReference type="PRINTS" id="PR00624">
    <property type="entry name" value="HISTONEH5"/>
</dbReference>
<dbReference type="SMART" id="SM00526">
    <property type="entry name" value="H15"/>
    <property type="match status" value="1"/>
</dbReference>
<dbReference type="SUPFAM" id="SSF46785">
    <property type="entry name" value="Winged helix' DNA-binding domain"/>
    <property type="match status" value="1"/>
</dbReference>
<dbReference type="PROSITE" id="PS51504">
    <property type="entry name" value="H15"/>
    <property type="match status" value="1"/>
</dbReference>
<protein>
    <recommendedName>
        <fullName>Histone H1.0</fullName>
    </recommendedName>
    <alternativeName>
        <fullName>Histone H1(0)</fullName>
    </alternativeName>
    <component>
        <recommendedName>
            <fullName>Histone H1.0, N-terminally processed</fullName>
        </recommendedName>
    </component>
</protein>
<gene>
    <name type="primary">H1-0</name>
</gene>
<reference key="1">
    <citation type="submission" date="2006-08" db="EMBL/GenBank/DDBJ databases">
        <authorList>
            <consortium name="NIH - Mammalian Gene Collection (MGC) project"/>
        </authorList>
    </citation>
    <scope>NUCLEOTIDE SEQUENCE [LARGE SCALE MRNA]</scope>
    <source>
        <strain>Hereford</strain>
        <tissue>Basal ganglia</tissue>
    </source>
</reference>
<organism>
    <name type="scientific">Bos taurus</name>
    <name type="common">Bovine</name>
    <dbReference type="NCBI Taxonomy" id="9913"/>
    <lineage>
        <taxon>Eukaryota</taxon>
        <taxon>Metazoa</taxon>
        <taxon>Chordata</taxon>
        <taxon>Craniata</taxon>
        <taxon>Vertebrata</taxon>
        <taxon>Euteleostomi</taxon>
        <taxon>Mammalia</taxon>
        <taxon>Eutheria</taxon>
        <taxon>Laurasiatheria</taxon>
        <taxon>Artiodactyla</taxon>
        <taxon>Ruminantia</taxon>
        <taxon>Pecora</taxon>
        <taxon>Bovidae</taxon>
        <taxon>Bovinae</taxon>
        <taxon>Bos</taxon>
    </lineage>
</organism>
<sequence>MTENSTSTPAAKPKRAKASKKSTDHPKYSDMIVAAIQAEKNRAGSSRQSIQKYIKSHYKVGENADSQIKLSIKRLVTTGVLKQTKGVGASGSFRLAKSDEPKRSVAFKKTKKEVKKVATPKKAAKPKKAASKAPSKKPKATPVKKAKKKPAATPKKTKKPKTVKAKPVKASKPKKTKPVKPKAKSSAKRTGKKK</sequence>
<feature type="chain" id="PRO_0000423206" description="Histone H1.0">
    <location>
        <begin position="1"/>
        <end position="194"/>
    </location>
</feature>
<feature type="initiator methionine" description="Removed; alternate" evidence="2">
    <location>
        <position position="1"/>
    </location>
</feature>
<feature type="chain" id="PRO_0000259963" description="Histone H1.0, N-terminally processed">
    <location>
        <begin position="2"/>
        <end position="194"/>
    </location>
</feature>
<feature type="domain" description="H15" evidence="4">
    <location>
        <begin position="24"/>
        <end position="97"/>
    </location>
</feature>
<feature type="region of interest" description="Disordered" evidence="5">
    <location>
        <begin position="1"/>
        <end position="29"/>
    </location>
</feature>
<feature type="region of interest" description="Disordered" evidence="5">
    <location>
        <begin position="83"/>
        <end position="194"/>
    </location>
</feature>
<feature type="compositionally biased region" description="Low complexity" evidence="5">
    <location>
        <begin position="1"/>
        <end position="11"/>
    </location>
</feature>
<feature type="compositionally biased region" description="Basic residues" evidence="5">
    <location>
        <begin position="105"/>
        <end position="194"/>
    </location>
</feature>
<feature type="modified residue" description="N-acetylmethionine" evidence="2">
    <location>
        <position position="1"/>
    </location>
</feature>
<feature type="modified residue" description="N-acetylthreonine; in Histone H1.0, N-terminally processed" evidence="2">
    <location>
        <position position="2"/>
    </location>
</feature>
<feature type="modified residue" description="Citrulline" evidence="3">
    <location>
        <position position="42"/>
    </location>
</feature>
<feature type="modified residue" description="ADP-ribosylserine" evidence="2">
    <location>
        <position position="104"/>
    </location>
</feature>
<accession>Q0IIJ2</accession>
<evidence type="ECO:0000250" key="1"/>
<evidence type="ECO:0000250" key="2">
    <source>
        <dbReference type="UniProtKB" id="P07305"/>
    </source>
</evidence>
<evidence type="ECO:0000250" key="3">
    <source>
        <dbReference type="UniProtKB" id="P43275"/>
    </source>
</evidence>
<evidence type="ECO:0000255" key="4">
    <source>
        <dbReference type="PROSITE-ProRule" id="PRU00837"/>
    </source>
</evidence>
<evidence type="ECO:0000256" key="5">
    <source>
        <dbReference type="SAM" id="MobiDB-lite"/>
    </source>
</evidence>
<keyword id="KW-0007">Acetylation</keyword>
<keyword id="KW-0013">ADP-ribosylation</keyword>
<keyword id="KW-0158">Chromosome</keyword>
<keyword id="KW-0164">Citrullination</keyword>
<keyword id="KW-0238">DNA-binding</keyword>
<keyword id="KW-0539">Nucleus</keyword>
<keyword id="KW-1185">Reference proteome</keyword>